<evidence type="ECO:0000250" key="1"/>
<evidence type="ECO:0000255" key="2">
    <source>
        <dbReference type="PROSITE-ProRule" id="PRU00140"/>
    </source>
</evidence>
<evidence type="ECO:0000255" key="3">
    <source>
        <dbReference type="PROSITE-ProRule" id="PRU00141"/>
    </source>
</evidence>
<evidence type="ECO:0000255" key="4">
    <source>
        <dbReference type="PROSITE-ProRule" id="PRU00159"/>
    </source>
</evidence>
<evidence type="ECO:0000305" key="5"/>
<reference key="1">
    <citation type="journal article" date="1992" name="Plant Mol. Biol.">
        <title>Molecular cloning of a novel phytochrome gene of the moss Ceratodon purpureus which encodes a putative light-regulated protein kinase.</title>
        <authorList>
            <person name="Thuemmler F."/>
            <person name="Dufner M."/>
            <person name="Kreisl P."/>
            <person name="Dittrich P."/>
        </authorList>
    </citation>
    <scope>NUCLEOTIDE SEQUENCE [GENOMIC DNA]</scope>
</reference>
<reference key="2">
    <citation type="journal article" date="1990" name="FEBS Lett.">
        <title>Phytochrome in lower plants. Detection and partial sequence of a phytochrome gene in the moss Ceratodon purpureus using the polymerase chain reaction.</title>
        <authorList>
            <person name="Thuemmler F."/>
            <person name="Beetz A."/>
            <person name="Ruediger W."/>
        </authorList>
    </citation>
    <scope>NUCLEOTIDE SEQUENCE [GENOMIC DNA] OF 49-550</scope>
</reference>
<reference key="3">
    <citation type="submission" date="1997-02" db="EMBL/GenBank/DDBJ databases">
        <authorList>
            <person name="Pasentsis K."/>
            <person name="Paulo N."/>
            <person name="Dittrich P."/>
            <person name="Algarra P."/>
            <person name="Thuemmler F."/>
            <person name="Dufner M."/>
            <person name="Kreisl P."/>
        </authorList>
    </citation>
    <scope>SEQUENCE REVISION TO C-TERMINUS</scope>
    <source>
        <strain>WT3</strain>
    </source>
</reference>
<feature type="chain" id="PRO_0000171970" description="Light-sensor Protein kinase">
    <location>
        <begin position="1"/>
        <end position="1307"/>
    </location>
</feature>
<feature type="domain" description="GAF">
    <location>
        <begin position="215"/>
        <end position="394"/>
    </location>
</feature>
<feature type="domain" description="PAS" evidence="2">
    <location>
        <begin position="609"/>
        <end position="680"/>
    </location>
</feature>
<feature type="domain" description="PAC" evidence="3">
    <location>
        <begin position="683"/>
        <end position="739"/>
    </location>
</feature>
<feature type="domain" description="Protein kinase" evidence="4">
    <location>
        <begin position="1004"/>
        <end position="1307"/>
    </location>
</feature>
<feature type="region of interest" description="Hinge">
    <location>
        <begin position="779"/>
        <end position="1003"/>
    </location>
</feature>
<feature type="active site" evidence="1">
    <location>
        <position position="1127"/>
    </location>
</feature>
<feature type="binding site" description="covalent" evidence="1">
    <location>
        <position position="320"/>
    </location>
    <ligand>
        <name>phytochromobilin</name>
        <dbReference type="ChEBI" id="CHEBI:189064"/>
    </ligand>
</feature>
<feature type="binding site" evidence="4">
    <location>
        <begin position="1010"/>
        <end position="1018"/>
    </location>
    <ligand>
        <name>ATP</name>
        <dbReference type="ChEBI" id="CHEBI:30616"/>
    </ligand>
</feature>
<feature type="binding site" evidence="4">
    <location>
        <position position="1031"/>
    </location>
    <ligand>
        <name>ATP</name>
        <dbReference type="ChEBI" id="CHEBI:30616"/>
    </ligand>
</feature>
<feature type="sequence conflict" description="In Ref. 2; CAA34936." evidence="5" ref="2">
    <original>W</original>
    <variation>L</variation>
    <location>
        <position position="513"/>
    </location>
</feature>
<name>PHY1_CERPU</name>
<gene>
    <name type="primary">PHY1</name>
    <name type="synonym">PHY</name>
</gene>
<organism>
    <name type="scientific">Ceratodon purpureus</name>
    <name type="common">Fire moss</name>
    <name type="synonym">Dicranum purpureum</name>
    <dbReference type="NCBI Taxonomy" id="3225"/>
    <lineage>
        <taxon>Eukaryota</taxon>
        <taxon>Viridiplantae</taxon>
        <taxon>Streptophyta</taxon>
        <taxon>Embryophyta</taxon>
        <taxon>Bryophyta</taxon>
        <taxon>Bryophytina</taxon>
        <taxon>Bryopsida</taxon>
        <taxon>Dicranidae</taxon>
        <taxon>Pseudoditrichales</taxon>
        <taxon>Ditrichaceae</taxon>
        <taxon>Ceratodon</taxon>
    </lineage>
</organism>
<dbReference type="EC" id="2.7.11.1"/>
<dbReference type="EMBL" id="U87632">
    <property type="protein sequence ID" value="AAB47762.1"/>
    <property type="molecule type" value="Genomic_DNA"/>
</dbReference>
<dbReference type="EMBL" id="X17084">
    <property type="protein sequence ID" value="CAA34936.1"/>
    <property type="molecule type" value="Genomic_DNA"/>
</dbReference>
<dbReference type="PIR" id="S27396">
    <property type="entry name" value="S27396"/>
</dbReference>
<dbReference type="SMR" id="P25848"/>
<dbReference type="GO" id="GO:0005886">
    <property type="term" value="C:plasma membrane"/>
    <property type="evidence" value="ECO:0007669"/>
    <property type="project" value="UniProtKB-SubCell"/>
</dbReference>
<dbReference type="GO" id="GO:0005524">
    <property type="term" value="F:ATP binding"/>
    <property type="evidence" value="ECO:0007669"/>
    <property type="project" value="UniProtKB-KW"/>
</dbReference>
<dbReference type="GO" id="GO:0009882">
    <property type="term" value="F:blue light photoreceptor activity"/>
    <property type="evidence" value="ECO:0007669"/>
    <property type="project" value="UniProtKB-ARBA"/>
</dbReference>
<dbReference type="GO" id="GO:0106310">
    <property type="term" value="F:protein serine kinase activity"/>
    <property type="evidence" value="ECO:0007669"/>
    <property type="project" value="RHEA"/>
</dbReference>
<dbReference type="GO" id="GO:0004674">
    <property type="term" value="F:protein serine/threonine kinase activity"/>
    <property type="evidence" value="ECO:0007669"/>
    <property type="project" value="UniProtKB-KW"/>
</dbReference>
<dbReference type="GO" id="GO:0009584">
    <property type="term" value="P:detection of visible light"/>
    <property type="evidence" value="ECO:0007669"/>
    <property type="project" value="InterPro"/>
</dbReference>
<dbReference type="GO" id="GO:0006355">
    <property type="term" value="P:regulation of DNA-templated transcription"/>
    <property type="evidence" value="ECO:0007669"/>
    <property type="project" value="InterPro"/>
</dbReference>
<dbReference type="CDD" id="cd00130">
    <property type="entry name" value="PAS"/>
    <property type="match status" value="1"/>
</dbReference>
<dbReference type="CDD" id="cd13999">
    <property type="entry name" value="STKc_MAP3K-like"/>
    <property type="match status" value="1"/>
</dbReference>
<dbReference type="FunFam" id="3.30.450.20:FF:000039">
    <property type="entry name" value="Phytochrome"/>
    <property type="match status" value="1"/>
</dbReference>
<dbReference type="FunFam" id="3.30.450.270:FF:000001">
    <property type="entry name" value="Phytochrome"/>
    <property type="match status" value="1"/>
</dbReference>
<dbReference type="Gene3D" id="3.30.450.270">
    <property type="match status" value="1"/>
</dbReference>
<dbReference type="Gene3D" id="3.30.450.40">
    <property type="match status" value="1"/>
</dbReference>
<dbReference type="Gene3D" id="3.30.450.20">
    <property type="entry name" value="PAS domain"/>
    <property type="match status" value="2"/>
</dbReference>
<dbReference type="Gene3D" id="3.30.200.20">
    <property type="entry name" value="Phosphorylase Kinase, domain 1"/>
    <property type="match status" value="1"/>
</dbReference>
<dbReference type="Gene3D" id="1.10.510.10">
    <property type="entry name" value="Transferase(Phosphotransferase) domain 1"/>
    <property type="match status" value="1"/>
</dbReference>
<dbReference type="InterPro" id="IPR003018">
    <property type="entry name" value="GAF"/>
</dbReference>
<dbReference type="InterPro" id="IPR029016">
    <property type="entry name" value="GAF-like_dom_sf"/>
</dbReference>
<dbReference type="InterPro" id="IPR011009">
    <property type="entry name" value="Kinase-like_dom_sf"/>
</dbReference>
<dbReference type="InterPro" id="IPR000014">
    <property type="entry name" value="PAS"/>
</dbReference>
<dbReference type="InterPro" id="IPR000700">
    <property type="entry name" value="PAS-assoc_C"/>
</dbReference>
<dbReference type="InterPro" id="IPR035965">
    <property type="entry name" value="PAS-like_dom_sf"/>
</dbReference>
<dbReference type="InterPro" id="IPR013654">
    <property type="entry name" value="PAS_2"/>
</dbReference>
<dbReference type="InterPro" id="IPR013767">
    <property type="entry name" value="PAS_fold"/>
</dbReference>
<dbReference type="InterPro" id="IPR016132">
    <property type="entry name" value="Phyto_chromo_attachment"/>
</dbReference>
<dbReference type="InterPro" id="IPR013516">
    <property type="entry name" value="Phyto_chromo_BS"/>
</dbReference>
<dbReference type="InterPro" id="IPR001294">
    <property type="entry name" value="Phytochrome"/>
</dbReference>
<dbReference type="InterPro" id="IPR013515">
    <property type="entry name" value="Phytochrome_cen-reg"/>
</dbReference>
<dbReference type="InterPro" id="IPR043150">
    <property type="entry name" value="Phytochrome_PHY_sf"/>
</dbReference>
<dbReference type="InterPro" id="IPR000719">
    <property type="entry name" value="Prot_kinase_dom"/>
</dbReference>
<dbReference type="InterPro" id="IPR017441">
    <property type="entry name" value="Protein_kinase_ATP_BS"/>
</dbReference>
<dbReference type="InterPro" id="IPR001245">
    <property type="entry name" value="Ser-Thr/Tyr_kinase_cat_dom"/>
</dbReference>
<dbReference type="InterPro" id="IPR008271">
    <property type="entry name" value="Ser/Thr_kinase_AS"/>
</dbReference>
<dbReference type="PANTHER" id="PTHR47876">
    <property type="entry name" value="OS08G0260000 PROTEIN"/>
    <property type="match status" value="1"/>
</dbReference>
<dbReference type="PANTHER" id="PTHR47876:SF3">
    <property type="entry name" value="PHYTOCHROME 1"/>
    <property type="match status" value="1"/>
</dbReference>
<dbReference type="Pfam" id="PF01590">
    <property type="entry name" value="GAF"/>
    <property type="match status" value="1"/>
</dbReference>
<dbReference type="Pfam" id="PF00989">
    <property type="entry name" value="PAS"/>
    <property type="match status" value="1"/>
</dbReference>
<dbReference type="Pfam" id="PF08446">
    <property type="entry name" value="PAS_2"/>
    <property type="match status" value="1"/>
</dbReference>
<dbReference type="Pfam" id="PF00360">
    <property type="entry name" value="PHY"/>
    <property type="match status" value="1"/>
</dbReference>
<dbReference type="Pfam" id="PF07714">
    <property type="entry name" value="PK_Tyr_Ser-Thr"/>
    <property type="match status" value="1"/>
</dbReference>
<dbReference type="PRINTS" id="PR01033">
    <property type="entry name" value="PHYTOCHROME"/>
</dbReference>
<dbReference type="SMART" id="SM00065">
    <property type="entry name" value="GAF"/>
    <property type="match status" value="1"/>
</dbReference>
<dbReference type="SMART" id="SM00091">
    <property type="entry name" value="PAS"/>
    <property type="match status" value="1"/>
</dbReference>
<dbReference type="SMART" id="SM00220">
    <property type="entry name" value="S_TKc"/>
    <property type="match status" value="1"/>
</dbReference>
<dbReference type="SUPFAM" id="SSF55781">
    <property type="entry name" value="GAF domain-like"/>
    <property type="match status" value="2"/>
</dbReference>
<dbReference type="SUPFAM" id="SSF56112">
    <property type="entry name" value="Protein kinase-like (PK-like)"/>
    <property type="match status" value="1"/>
</dbReference>
<dbReference type="SUPFAM" id="SSF55785">
    <property type="entry name" value="PYP-like sensor domain (PAS domain)"/>
    <property type="match status" value="2"/>
</dbReference>
<dbReference type="PROSITE" id="PS50113">
    <property type="entry name" value="PAC"/>
    <property type="match status" value="1"/>
</dbReference>
<dbReference type="PROSITE" id="PS50112">
    <property type="entry name" value="PAS"/>
    <property type="match status" value="1"/>
</dbReference>
<dbReference type="PROSITE" id="PS00245">
    <property type="entry name" value="PHYTOCHROME_1"/>
    <property type="match status" value="1"/>
</dbReference>
<dbReference type="PROSITE" id="PS50046">
    <property type="entry name" value="PHYTOCHROME_2"/>
    <property type="match status" value="1"/>
</dbReference>
<dbReference type="PROSITE" id="PS00107">
    <property type="entry name" value="PROTEIN_KINASE_ATP"/>
    <property type="match status" value="1"/>
</dbReference>
<dbReference type="PROSITE" id="PS50011">
    <property type="entry name" value="PROTEIN_KINASE_DOM"/>
    <property type="match status" value="1"/>
</dbReference>
<dbReference type="PROSITE" id="PS00108">
    <property type="entry name" value="PROTEIN_KINASE_ST"/>
    <property type="match status" value="1"/>
</dbReference>
<accession>P25848</accession>
<accession>P93100</accession>
<comment type="function">
    <text>Regulatory photoreceptor which exists in two forms that are reversibly interconvertible by light: the Pr form that absorbs maximally in the red region of the spectrum and the Pfr form that absorbs maximally in the far-red region. Photoconversion of Pr to Pfr induces an array of morphogenic responses, whereas reconversion of Pfr to Pr cancels the induction of those responses. Pfr controls the expression of a number of nuclear genes including those encoding the small subunit of ribulose-bisphosphate carboxylase, chlorophyll A/B binding protein, protochlorophyllide reductase, rRNA, etc. It also controls the expression of its own gene(s) in a negative feedback fashion.</text>
</comment>
<comment type="catalytic activity">
    <reaction>
        <text>L-seryl-[protein] + ATP = O-phospho-L-seryl-[protein] + ADP + H(+)</text>
        <dbReference type="Rhea" id="RHEA:17989"/>
        <dbReference type="Rhea" id="RHEA-COMP:9863"/>
        <dbReference type="Rhea" id="RHEA-COMP:11604"/>
        <dbReference type="ChEBI" id="CHEBI:15378"/>
        <dbReference type="ChEBI" id="CHEBI:29999"/>
        <dbReference type="ChEBI" id="CHEBI:30616"/>
        <dbReference type="ChEBI" id="CHEBI:83421"/>
        <dbReference type="ChEBI" id="CHEBI:456216"/>
        <dbReference type="EC" id="2.7.11.1"/>
    </reaction>
</comment>
<comment type="catalytic activity">
    <reaction>
        <text>L-threonyl-[protein] + ATP = O-phospho-L-threonyl-[protein] + ADP + H(+)</text>
        <dbReference type="Rhea" id="RHEA:46608"/>
        <dbReference type="Rhea" id="RHEA-COMP:11060"/>
        <dbReference type="Rhea" id="RHEA-COMP:11605"/>
        <dbReference type="ChEBI" id="CHEBI:15378"/>
        <dbReference type="ChEBI" id="CHEBI:30013"/>
        <dbReference type="ChEBI" id="CHEBI:30616"/>
        <dbReference type="ChEBI" id="CHEBI:61977"/>
        <dbReference type="ChEBI" id="CHEBI:456216"/>
        <dbReference type="EC" id="2.7.11.1"/>
    </reaction>
</comment>
<comment type="subunit">
    <text>Homodimer.</text>
</comment>
<comment type="subcellular location">
    <subcellularLocation>
        <location>Cell membrane</location>
    </subcellularLocation>
    <text>Located in a fixed position close to the plasma membrane.</text>
</comment>
<comment type="PTM">
    <text evidence="1">Contains one covalently linked phytochromobilin chromophore.</text>
</comment>
<comment type="similarity">
    <text evidence="5">In the N-terminal section; belongs to the phytochrome family.</text>
</comment>
<comment type="similarity">
    <text evidence="5">In the C-terminal section; belongs to the protein kinase superfamily. Ser/Thr protein kinase family.</text>
</comment>
<sequence>MSATKKTYSSTTSAKSKHSVRVAQTTADAALEAVYEMSGDSGDSFDYSKSVGQSAESVPAGAVTAYLQRMQREGLIQNFGCMVAVEEPNFCVIAYSENASEFLDLIPQAVPSMGEMDVLGIGTDIRTLFTPSSSAALEKAAATQDISLLNPITVHCRRSGKPLYAIAHRIDIGIVIDFEAVKMIDVPVSAAAGALQSHKLAARAITRLQALPGGDIELLCDTIVEEVRELTGYDRVMAFKFHEDEHGEVVAEIRRMDLEPYMGLHYPATDIPQASRFLLMKNRVRLIADCYASPVKLIQDPDIRQPVSLAGSTLRAPHGCHAQYMGNMGSIASLVMAVIINDNEEYSRGAIQRGRKLWGLVVCQHTSPRTVPFPLRSVCEFLMQVFGMQLNLHVELAAQLREKHILRTQTLLCDMLLRDAPIGIVSQTPNIMDLVKCDGAALYYGKRVWLLGTTPTENQIKEIADWLLEHHNDSTGLSTDSLADANYPGAHLLGDAVCGMAAAKITAKDFLFWFRSHTATEVKWGGAKHDPDEKDDGRKMHPRSSFKAFLEVVNKRSPPWEDVEMDAIHSLQLILRGSFRDIADSDTKTMIHARLNDLKLQGVEERNALANEMSRVLETAAAPILAVDSRGMINAWNAKIAQVTGLPVEEAMHCSLTKDLVLDESVVVVERLLSLALQGEEEQNVEIKLKTFGTQTTERAVILIVNACCSRDASDFVVGVFFVGQDVTEQRMFMDRFTRIQGGEKTTVQDPHPLMRPSFDGDEFGRTFKRNSALGGLKDHATGSVERLDLYLRRAEECMEVMETIPSPKFNNKQCQYLAGKLKAVLQSASLFLRISHHEHHELGASIDMGRHVEIFKLLLALAKEIESFIQGCCKDEWIKAAMTLTNVSEYVSSMGFNLELCKIAFCKSCAASGSLTLDQIEVICKDEAEVVKRNASIDVDTLFAKVIYDLTEKTLSSDQNDLAIYLLQRLKRAKPILPSFSSRPSWWNFYDDWSFSEKFFQWIQITGSLGSGSSATVEKAVWLGTPVAKKTFYGRNNEDFKREVEILAELCHPNITSMFCSPLYRRKCSIIMELMDGDLLALMQRRLDRNEDHDSPPFSILEVVDIILQTSEGMNYLHEKGIIHRDLKSMNILVKSVKVTKSEIGYVHVKVADFGLSKTKDSSTRYSNQTWNRGTNRWMAPEVINLGYESTEGEISFDGKVPKYPLKSDVYSFGMVCYEVLTGDVPFPEEKNPNNVKRMVLEGVRPDLPAHCPIELKALITDCWNQDPLKRPSFAVICQKLKYLKYLLMTGFSSYQDSYPSTEEPS</sequence>
<proteinExistence type="inferred from homology"/>
<keyword id="KW-0067">ATP-binding</keyword>
<keyword id="KW-1003">Cell membrane</keyword>
<keyword id="KW-0157">Chromophore</keyword>
<keyword id="KW-0418">Kinase</keyword>
<keyword id="KW-0472">Membrane</keyword>
<keyword id="KW-0547">Nucleotide-binding</keyword>
<keyword id="KW-0600">Photoreceptor protein</keyword>
<keyword id="KW-0675">Receptor</keyword>
<keyword id="KW-0716">Sensory transduction</keyword>
<keyword id="KW-0723">Serine/threonine-protein kinase</keyword>
<keyword id="KW-0804">Transcription</keyword>
<keyword id="KW-0805">Transcription regulation</keyword>
<keyword id="KW-0808">Transferase</keyword>
<protein>
    <recommendedName>
        <fullName>Light-sensor Protein kinase</fullName>
    </recommendedName>
    <domain>
        <recommendedName>
            <fullName>Phytochrome</fullName>
        </recommendedName>
    </domain>
    <domain>
        <recommendedName>
            <fullName>Protein kinase</fullName>
            <ecNumber>2.7.11.1</ecNumber>
        </recommendedName>
    </domain>
</protein>